<accession>Q9SDD6</accession>
<accession>B7E2T3</accession>
<protein>
    <recommendedName>
        <fullName>Peroxiredoxin-2F, mitochondrial</fullName>
        <ecNumber evidence="2">1.11.1.25</ecNumber>
    </recommendedName>
    <alternativeName>
        <fullName evidence="5">Glutaredoxin-dependent peroxiredoxin</fullName>
    </alternativeName>
    <alternativeName>
        <fullName>Peroxiredoxin IIF</fullName>
    </alternativeName>
    <alternativeName>
        <fullName>Thioredoxin peroxidase 2F</fullName>
    </alternativeName>
</protein>
<organism>
    <name type="scientific">Oryza sativa subsp. japonica</name>
    <name type="common">Rice</name>
    <dbReference type="NCBI Taxonomy" id="39947"/>
    <lineage>
        <taxon>Eukaryota</taxon>
        <taxon>Viridiplantae</taxon>
        <taxon>Streptophyta</taxon>
        <taxon>Embryophyta</taxon>
        <taxon>Tracheophyta</taxon>
        <taxon>Spermatophyta</taxon>
        <taxon>Magnoliopsida</taxon>
        <taxon>Liliopsida</taxon>
        <taxon>Poales</taxon>
        <taxon>Poaceae</taxon>
        <taxon>BOP clade</taxon>
        <taxon>Oryzoideae</taxon>
        <taxon>Oryzeae</taxon>
        <taxon>Oryzinae</taxon>
        <taxon>Oryza</taxon>
        <taxon>Oryza sativa</taxon>
    </lineage>
</organism>
<proteinExistence type="evidence at transcript level"/>
<name>PRX2F_ORYSJ</name>
<sequence>MASALLRKATVGGSAAAAAARWASRGLASVGSGSDIVSAAPGVSLQKARSWDEGVATNFSTTPLKDIFHGKKVVIFGLPGAYTGVCSQAHVPSYKNNIDKLKAKGVDSVICVSVNDPYALNGWAEKLQAKDAIEFYGDFDGSFHKSLDLEVDLSAALLGRRSHRWSAFVDDGKIKAFNVEVAPSDFKVSGAEVILDQI</sequence>
<keyword id="KW-0049">Antioxidant</keyword>
<keyword id="KW-0496">Mitochondrion</keyword>
<keyword id="KW-0560">Oxidoreductase</keyword>
<keyword id="KW-0575">Peroxidase</keyword>
<keyword id="KW-0676">Redox-active center</keyword>
<keyword id="KW-1185">Reference proteome</keyword>
<keyword id="KW-0809">Transit peptide</keyword>
<evidence type="ECO:0000250" key="1">
    <source>
        <dbReference type="UniProtKB" id="A9PCL4"/>
    </source>
</evidence>
<evidence type="ECO:0000250" key="2">
    <source>
        <dbReference type="UniProtKB" id="Q9M7T0"/>
    </source>
</evidence>
<evidence type="ECO:0000255" key="3"/>
<evidence type="ECO:0000255" key="4">
    <source>
        <dbReference type="PROSITE-ProRule" id="PRU00691"/>
    </source>
</evidence>
<evidence type="ECO:0000305" key="5"/>
<comment type="function">
    <text evidence="2">Thiol-specific peroxidase that catalyzes the reduction of hydrogen peroxide and organic hydroperoxides to water and alcohols, respectively. Plays a role in cell protection against oxidative stress by detoxifying peroxides. Reduces preferentially hydrogen peroxide rather than alkyl peroxides. May be involved in mitochondrial redox homeostasis.</text>
</comment>
<comment type="catalytic activity">
    <reaction evidence="2">
        <text>[glutaredoxin]-dithiol + a hydroperoxide = [glutaredoxin]-disulfide + an alcohol + H2O</text>
        <dbReference type="Rhea" id="RHEA:62624"/>
        <dbReference type="Rhea" id="RHEA-COMP:10729"/>
        <dbReference type="Rhea" id="RHEA-COMP:10730"/>
        <dbReference type="ChEBI" id="CHEBI:15377"/>
        <dbReference type="ChEBI" id="CHEBI:29950"/>
        <dbReference type="ChEBI" id="CHEBI:30879"/>
        <dbReference type="ChEBI" id="CHEBI:35924"/>
        <dbReference type="ChEBI" id="CHEBI:50058"/>
        <dbReference type="EC" id="1.11.1.25"/>
    </reaction>
</comment>
<comment type="subunit">
    <text evidence="2">Monomer.</text>
</comment>
<comment type="subcellular location">
    <subcellularLocation>
        <location evidence="2">Mitochondrion matrix</location>
    </subcellularLocation>
</comment>
<comment type="miscellaneous">
    <text evidence="2">The active site is a conserved redox-active cysteine residue, the peroxidatic cysteine (C(P)), which makes the nucleophilic attack on the peroxide substrate. The peroxide oxidizes the C(P)-SH to cysteine sulfenic acid (C(P)-SOH), which then reacts with another cysteine residue, the resolving cysteine (C(R)), to form a disulfide bridge. The disulfide is subsequently reduced by an appropriate electron donor to complete the catalytic cycle. In this 1-Cys peroxiredoxin, no C(R) is present and C(P) instead forms a disulfide with a cysteine from another protein or with a small thiol molecule. C(P) can be reactivated by glutathione or the mitochondrial glutaredoxin (Grx) or thioredoxin (Trx) systems.</text>
</comment>
<comment type="similarity">
    <text evidence="5">Belongs to the peroxiredoxin family. Prx5 subfamily.</text>
</comment>
<dbReference type="EC" id="1.11.1.25" evidence="2"/>
<dbReference type="EMBL" id="AP000969">
    <property type="protein sequence ID" value="BAA88530.1"/>
    <property type="molecule type" value="Genomic_DNA"/>
</dbReference>
<dbReference type="EMBL" id="AP001080">
    <property type="protein sequence ID" value="BAA90363.1"/>
    <property type="molecule type" value="Genomic_DNA"/>
</dbReference>
<dbReference type="EMBL" id="AP008207">
    <property type="protein sequence ID" value="BAF04594.1"/>
    <property type="molecule type" value="Genomic_DNA"/>
</dbReference>
<dbReference type="EMBL" id="AP014957">
    <property type="protein sequence ID" value="BAS71469.1"/>
    <property type="molecule type" value="Genomic_DNA"/>
</dbReference>
<dbReference type="EMBL" id="AK058396">
    <property type="protein sequence ID" value="BAG86680.1"/>
    <property type="molecule type" value="mRNA"/>
</dbReference>
<dbReference type="RefSeq" id="XP_015621284.1">
    <property type="nucleotide sequence ID" value="XM_015765798.1"/>
</dbReference>
<dbReference type="SMR" id="Q9SDD6"/>
<dbReference type="FunCoup" id="Q9SDD6">
    <property type="interactions" value="954"/>
</dbReference>
<dbReference type="STRING" id="39947.Q9SDD6"/>
<dbReference type="PeroxiBase" id="4020">
    <property type="entry name" value="OsPrxII06"/>
</dbReference>
<dbReference type="PaxDb" id="39947-Q9SDD6"/>
<dbReference type="EnsemblPlants" id="Os01t0266600-01">
    <property type="protein sequence ID" value="Os01t0266600-01"/>
    <property type="gene ID" value="Os01g0266600"/>
</dbReference>
<dbReference type="EnsemblPlants" id="Os01t0266600-02">
    <property type="protein sequence ID" value="Os01t0266600-02"/>
    <property type="gene ID" value="Os01g0266600"/>
</dbReference>
<dbReference type="Gramene" id="Os01t0266600-01">
    <property type="protein sequence ID" value="Os01t0266600-01"/>
    <property type="gene ID" value="Os01g0266600"/>
</dbReference>
<dbReference type="Gramene" id="Os01t0266600-02">
    <property type="protein sequence ID" value="Os01t0266600-02"/>
    <property type="gene ID" value="Os01g0266600"/>
</dbReference>
<dbReference type="KEGG" id="dosa:Os01g0266600"/>
<dbReference type="eggNOG" id="KOG0541">
    <property type="taxonomic scope" value="Eukaryota"/>
</dbReference>
<dbReference type="HOGENOM" id="CLU_072440_2_1_1"/>
<dbReference type="InParanoid" id="Q9SDD6"/>
<dbReference type="OMA" id="YTMNGWA"/>
<dbReference type="OrthoDB" id="1882547at2759"/>
<dbReference type="Proteomes" id="UP000000763">
    <property type="component" value="Chromosome 1"/>
</dbReference>
<dbReference type="Proteomes" id="UP000059680">
    <property type="component" value="Chromosome 1"/>
</dbReference>
<dbReference type="GO" id="GO:0005737">
    <property type="term" value="C:cytoplasm"/>
    <property type="evidence" value="ECO:0000318"/>
    <property type="project" value="GO_Central"/>
</dbReference>
<dbReference type="GO" id="GO:0005759">
    <property type="term" value="C:mitochondrial matrix"/>
    <property type="evidence" value="ECO:0007669"/>
    <property type="project" value="UniProtKB-SubCell"/>
</dbReference>
<dbReference type="GO" id="GO:0005739">
    <property type="term" value="C:mitochondrion"/>
    <property type="evidence" value="ECO:0000318"/>
    <property type="project" value="GO_Central"/>
</dbReference>
<dbReference type="GO" id="GO:0008379">
    <property type="term" value="F:thioredoxin peroxidase activity"/>
    <property type="evidence" value="ECO:0000318"/>
    <property type="project" value="GO_Central"/>
</dbReference>
<dbReference type="GO" id="GO:0045454">
    <property type="term" value="P:cell redox homeostasis"/>
    <property type="evidence" value="ECO:0000318"/>
    <property type="project" value="GO_Central"/>
</dbReference>
<dbReference type="GO" id="GO:0034599">
    <property type="term" value="P:cellular response to oxidative stress"/>
    <property type="evidence" value="ECO:0000318"/>
    <property type="project" value="GO_Central"/>
</dbReference>
<dbReference type="GO" id="GO:0042744">
    <property type="term" value="P:hydrogen peroxide catabolic process"/>
    <property type="evidence" value="ECO:0000318"/>
    <property type="project" value="GO_Central"/>
</dbReference>
<dbReference type="CDD" id="cd03013">
    <property type="entry name" value="PRX5_like"/>
    <property type="match status" value="1"/>
</dbReference>
<dbReference type="FunFam" id="3.40.30.10:FF:000190">
    <property type="entry name" value="Peroxiredoxin"/>
    <property type="match status" value="1"/>
</dbReference>
<dbReference type="Gene3D" id="3.40.30.10">
    <property type="entry name" value="Glutaredoxin"/>
    <property type="match status" value="1"/>
</dbReference>
<dbReference type="InterPro" id="IPR037944">
    <property type="entry name" value="PRX5-like"/>
</dbReference>
<dbReference type="InterPro" id="IPR013740">
    <property type="entry name" value="Redoxin"/>
</dbReference>
<dbReference type="InterPro" id="IPR036249">
    <property type="entry name" value="Thioredoxin-like_sf"/>
</dbReference>
<dbReference type="InterPro" id="IPR013766">
    <property type="entry name" value="Thioredoxin_domain"/>
</dbReference>
<dbReference type="PANTHER" id="PTHR10430">
    <property type="entry name" value="PEROXIREDOXIN"/>
    <property type="match status" value="1"/>
</dbReference>
<dbReference type="PANTHER" id="PTHR10430:SF34">
    <property type="entry name" value="PEROXIREDOXIN-2F, MITOCHONDRIAL"/>
    <property type="match status" value="1"/>
</dbReference>
<dbReference type="Pfam" id="PF08534">
    <property type="entry name" value="Redoxin"/>
    <property type="match status" value="1"/>
</dbReference>
<dbReference type="SUPFAM" id="SSF52833">
    <property type="entry name" value="Thioredoxin-like"/>
    <property type="match status" value="1"/>
</dbReference>
<dbReference type="PROSITE" id="PS51352">
    <property type="entry name" value="THIOREDOXIN_2"/>
    <property type="match status" value="1"/>
</dbReference>
<reference key="1">
    <citation type="journal article" date="2002" name="Nature">
        <title>The genome sequence and structure of rice chromosome 1.</title>
        <authorList>
            <person name="Sasaki T."/>
            <person name="Matsumoto T."/>
            <person name="Yamamoto K."/>
            <person name="Sakata K."/>
            <person name="Baba T."/>
            <person name="Katayose Y."/>
            <person name="Wu J."/>
            <person name="Niimura Y."/>
            <person name="Cheng Z."/>
            <person name="Nagamura Y."/>
            <person name="Antonio B.A."/>
            <person name="Kanamori H."/>
            <person name="Hosokawa S."/>
            <person name="Masukawa M."/>
            <person name="Arikawa K."/>
            <person name="Chiden Y."/>
            <person name="Hayashi M."/>
            <person name="Okamoto M."/>
            <person name="Ando T."/>
            <person name="Aoki H."/>
            <person name="Arita K."/>
            <person name="Hamada M."/>
            <person name="Harada C."/>
            <person name="Hijishita S."/>
            <person name="Honda M."/>
            <person name="Ichikawa Y."/>
            <person name="Idonuma A."/>
            <person name="Iijima M."/>
            <person name="Ikeda M."/>
            <person name="Ikeno M."/>
            <person name="Ito S."/>
            <person name="Ito T."/>
            <person name="Ito Y."/>
            <person name="Ito Y."/>
            <person name="Iwabuchi A."/>
            <person name="Kamiya K."/>
            <person name="Karasawa W."/>
            <person name="Katagiri S."/>
            <person name="Kikuta A."/>
            <person name="Kobayashi N."/>
            <person name="Kono I."/>
            <person name="Machita K."/>
            <person name="Maehara T."/>
            <person name="Mizuno H."/>
            <person name="Mizubayashi T."/>
            <person name="Mukai Y."/>
            <person name="Nagasaki H."/>
            <person name="Nakashima M."/>
            <person name="Nakama Y."/>
            <person name="Nakamichi Y."/>
            <person name="Nakamura M."/>
            <person name="Namiki N."/>
            <person name="Negishi M."/>
            <person name="Ohta I."/>
            <person name="Ono N."/>
            <person name="Saji S."/>
            <person name="Sakai K."/>
            <person name="Shibata M."/>
            <person name="Shimokawa T."/>
            <person name="Shomura A."/>
            <person name="Song J."/>
            <person name="Takazaki Y."/>
            <person name="Terasawa K."/>
            <person name="Tsuji K."/>
            <person name="Waki K."/>
            <person name="Yamagata H."/>
            <person name="Yamane H."/>
            <person name="Yoshiki S."/>
            <person name="Yoshihara R."/>
            <person name="Yukawa K."/>
            <person name="Zhong H."/>
            <person name="Iwama H."/>
            <person name="Endo T."/>
            <person name="Ito H."/>
            <person name="Hahn J.H."/>
            <person name="Kim H.-I."/>
            <person name="Eun M.-Y."/>
            <person name="Yano M."/>
            <person name="Jiang J."/>
            <person name="Gojobori T."/>
        </authorList>
    </citation>
    <scope>NUCLEOTIDE SEQUENCE [LARGE SCALE GENOMIC DNA]</scope>
    <source>
        <strain>cv. Nipponbare</strain>
    </source>
</reference>
<reference key="2">
    <citation type="journal article" date="2005" name="Nature">
        <title>The map-based sequence of the rice genome.</title>
        <authorList>
            <consortium name="International rice genome sequencing project (IRGSP)"/>
        </authorList>
    </citation>
    <scope>NUCLEOTIDE SEQUENCE [LARGE SCALE GENOMIC DNA]</scope>
    <source>
        <strain>cv. Nipponbare</strain>
    </source>
</reference>
<reference key="3">
    <citation type="journal article" date="2008" name="Nucleic Acids Res.">
        <title>The rice annotation project database (RAP-DB): 2008 update.</title>
        <authorList>
            <consortium name="The rice annotation project (RAP)"/>
        </authorList>
    </citation>
    <scope>GENOME REANNOTATION</scope>
    <source>
        <strain>cv. Nipponbare</strain>
    </source>
</reference>
<reference key="4">
    <citation type="journal article" date="2013" name="Rice">
        <title>Improvement of the Oryza sativa Nipponbare reference genome using next generation sequence and optical map data.</title>
        <authorList>
            <person name="Kawahara Y."/>
            <person name="de la Bastide M."/>
            <person name="Hamilton J.P."/>
            <person name="Kanamori H."/>
            <person name="McCombie W.R."/>
            <person name="Ouyang S."/>
            <person name="Schwartz D.C."/>
            <person name="Tanaka T."/>
            <person name="Wu J."/>
            <person name="Zhou S."/>
            <person name="Childs K.L."/>
            <person name="Davidson R.M."/>
            <person name="Lin H."/>
            <person name="Quesada-Ocampo L."/>
            <person name="Vaillancourt B."/>
            <person name="Sakai H."/>
            <person name="Lee S.S."/>
            <person name="Kim J."/>
            <person name="Numa H."/>
            <person name="Itoh T."/>
            <person name="Buell C.R."/>
            <person name="Matsumoto T."/>
        </authorList>
    </citation>
    <scope>GENOME REANNOTATION</scope>
    <source>
        <strain>cv. Nipponbare</strain>
    </source>
</reference>
<reference key="5">
    <citation type="journal article" date="2003" name="Science">
        <title>Collection, mapping, and annotation of over 28,000 cDNA clones from japonica rice.</title>
        <authorList>
            <consortium name="The rice full-length cDNA consortium"/>
        </authorList>
    </citation>
    <scope>NUCLEOTIDE SEQUENCE [LARGE SCALE MRNA]</scope>
    <source>
        <strain>cv. Nipponbare</strain>
    </source>
</reference>
<feature type="transit peptide" description="Mitochondrion" evidence="3">
    <location>
        <begin position="1"/>
        <end position="27"/>
    </location>
</feature>
<feature type="chain" id="PRO_0000282962" description="Peroxiredoxin-2F, mitochondrial">
    <location>
        <begin position="28"/>
        <end position="198"/>
    </location>
</feature>
<feature type="domain" description="Thioredoxin" evidence="4">
    <location>
        <begin position="34"/>
        <end position="198"/>
    </location>
</feature>
<feature type="active site" description="Cysteine sulfenic acid (-SOH) intermediate" evidence="1">
    <location>
        <position position="86"/>
    </location>
</feature>
<gene>
    <name type="primary">PRXIIF</name>
    <name type="ordered locus">Os01g0266600</name>
    <name type="ordered locus">LOC_Os01g16152</name>
    <name type="ORF">P0011D01.6</name>
    <name type="ORF">P0499C11.34</name>
</gene>